<name>GR22C_DROME</name>
<feature type="chain" id="PRO_0000216495" description="Putative gustatory receptor 22c">
    <location>
        <begin position="1"/>
        <end position="383"/>
    </location>
</feature>
<feature type="topological domain" description="Cytoplasmic" evidence="1">
    <location>
        <begin position="1"/>
        <end position="11"/>
    </location>
</feature>
<feature type="transmembrane region" description="Helical; Name=1" evidence="2">
    <location>
        <begin position="12"/>
        <end position="32"/>
    </location>
</feature>
<feature type="topological domain" description="Extracellular" evidence="1">
    <location>
        <begin position="33"/>
        <end position="45"/>
    </location>
</feature>
<feature type="transmembrane region" description="Helical; Name=2" evidence="2">
    <location>
        <begin position="46"/>
        <end position="66"/>
    </location>
</feature>
<feature type="topological domain" description="Cytoplasmic" evidence="1">
    <location>
        <begin position="67"/>
        <end position="86"/>
    </location>
</feature>
<feature type="transmembrane region" description="Helical; Name=3" evidence="2">
    <location>
        <begin position="87"/>
        <end position="107"/>
    </location>
</feature>
<feature type="topological domain" description="Extracellular" evidence="1">
    <location>
        <begin position="108"/>
        <end position="144"/>
    </location>
</feature>
<feature type="transmembrane region" description="Helical; Name=4" evidence="2">
    <location>
        <begin position="145"/>
        <end position="165"/>
    </location>
</feature>
<feature type="topological domain" description="Cytoplasmic" evidence="1">
    <location>
        <begin position="166"/>
        <end position="250"/>
    </location>
</feature>
<feature type="transmembrane region" description="Helical; Name=5" evidence="2">
    <location>
        <begin position="251"/>
        <end position="271"/>
    </location>
</feature>
<feature type="topological domain" description="Extracellular" evidence="1">
    <location>
        <begin position="272"/>
        <end position="279"/>
    </location>
</feature>
<feature type="transmembrane region" description="Helical; Name=6" evidence="2">
    <location>
        <begin position="280"/>
        <end position="300"/>
    </location>
</feature>
<feature type="topological domain" description="Cytoplasmic" evidence="1">
    <location>
        <begin position="301"/>
        <end position="360"/>
    </location>
</feature>
<feature type="transmembrane region" description="Helical; Name=7" evidence="2">
    <location>
        <begin position="361"/>
        <end position="381"/>
    </location>
</feature>
<feature type="topological domain" description="Extracellular" evidence="1">
    <location>
        <begin position="382"/>
        <end position="383"/>
    </location>
</feature>
<feature type="glycosylation site" description="N-linked (GlcNAc...) asparagine" evidence="2">
    <location>
        <position position="130"/>
    </location>
</feature>
<keyword id="KW-1003">Cell membrane</keyword>
<keyword id="KW-0325">Glycoprotein</keyword>
<keyword id="KW-0472">Membrane</keyword>
<keyword id="KW-0675">Receptor</keyword>
<keyword id="KW-1185">Reference proteome</keyword>
<keyword id="KW-0807">Transducer</keyword>
<keyword id="KW-0812">Transmembrane</keyword>
<keyword id="KW-1133">Transmembrane helix</keyword>
<dbReference type="EMBL" id="AE014134">
    <property type="protein sequence ID" value="AAN10463.2"/>
    <property type="molecule type" value="Genomic_DNA"/>
</dbReference>
<dbReference type="RefSeq" id="NP_722732.2">
    <property type="nucleotide sequence ID" value="NM_164439.2"/>
</dbReference>
<dbReference type="SMR" id="P58952"/>
<dbReference type="FunCoup" id="P58952">
    <property type="interactions" value="44"/>
</dbReference>
<dbReference type="IntAct" id="P58952">
    <property type="interactions" value="1"/>
</dbReference>
<dbReference type="STRING" id="7227.FBpp0077566"/>
<dbReference type="GlyCosmos" id="P58952">
    <property type="glycosylation" value="1 site, No reported glycans"/>
</dbReference>
<dbReference type="GlyGen" id="P58952">
    <property type="glycosylation" value="1 site"/>
</dbReference>
<dbReference type="PaxDb" id="7227-FBpp0077566"/>
<dbReference type="EnsemblMetazoa" id="FBtr0077899">
    <property type="protein sequence ID" value="FBpp0077566"/>
    <property type="gene ID" value="FBgn0265138"/>
</dbReference>
<dbReference type="GeneID" id="117499"/>
<dbReference type="KEGG" id="dme:Dmel_CG31929"/>
<dbReference type="AGR" id="FB:FBgn0265138"/>
<dbReference type="CTD" id="117499"/>
<dbReference type="FlyBase" id="FBgn0265138">
    <property type="gene designation" value="Gr22c"/>
</dbReference>
<dbReference type="VEuPathDB" id="VectorBase:FBgn0265138"/>
<dbReference type="eggNOG" id="ENOG502T94A">
    <property type="taxonomic scope" value="Eukaryota"/>
</dbReference>
<dbReference type="GeneTree" id="ENSGT00940000166130"/>
<dbReference type="HOGENOM" id="CLU_033758_0_0_1"/>
<dbReference type="InParanoid" id="P58952"/>
<dbReference type="OMA" id="FHVCGLF"/>
<dbReference type="OrthoDB" id="8067175at2759"/>
<dbReference type="PhylomeDB" id="P58952"/>
<dbReference type="BioGRID-ORCS" id="117499">
    <property type="hits" value="0 hits in 1 CRISPR screen"/>
</dbReference>
<dbReference type="GenomeRNAi" id="117499"/>
<dbReference type="PRO" id="PR:P58952"/>
<dbReference type="Proteomes" id="UP000000803">
    <property type="component" value="Chromosome 2L"/>
</dbReference>
<dbReference type="GO" id="GO:0030424">
    <property type="term" value="C:axon"/>
    <property type="evidence" value="ECO:0000318"/>
    <property type="project" value="GO_Central"/>
</dbReference>
<dbReference type="GO" id="GO:0030425">
    <property type="term" value="C:dendrite"/>
    <property type="evidence" value="ECO:0000318"/>
    <property type="project" value="GO_Central"/>
</dbReference>
<dbReference type="GO" id="GO:0016020">
    <property type="term" value="C:membrane"/>
    <property type="evidence" value="ECO:0000303"/>
    <property type="project" value="UniProtKB"/>
</dbReference>
<dbReference type="GO" id="GO:0043025">
    <property type="term" value="C:neuronal cell body"/>
    <property type="evidence" value="ECO:0000318"/>
    <property type="project" value="GO_Central"/>
</dbReference>
<dbReference type="GO" id="GO:0005886">
    <property type="term" value="C:plasma membrane"/>
    <property type="evidence" value="ECO:0000250"/>
    <property type="project" value="FlyBase"/>
</dbReference>
<dbReference type="GO" id="GO:0015276">
    <property type="term" value="F:ligand-gated monoatomic ion channel activity"/>
    <property type="evidence" value="ECO:0000250"/>
    <property type="project" value="FlyBase"/>
</dbReference>
<dbReference type="GO" id="GO:0008527">
    <property type="term" value="F:taste receptor activity"/>
    <property type="evidence" value="ECO:0000250"/>
    <property type="project" value="FlyBase"/>
</dbReference>
<dbReference type="GO" id="GO:0034220">
    <property type="term" value="P:monoatomic ion transmembrane transport"/>
    <property type="evidence" value="ECO:0000250"/>
    <property type="project" value="FlyBase"/>
</dbReference>
<dbReference type="GO" id="GO:0050909">
    <property type="term" value="P:sensory perception of taste"/>
    <property type="evidence" value="ECO:0000250"/>
    <property type="project" value="FlyBase"/>
</dbReference>
<dbReference type="GO" id="GO:0007165">
    <property type="term" value="P:signal transduction"/>
    <property type="evidence" value="ECO:0007669"/>
    <property type="project" value="UniProtKB-KW"/>
</dbReference>
<dbReference type="InterPro" id="IPR013604">
    <property type="entry name" value="7TM_chemorcpt"/>
</dbReference>
<dbReference type="PANTHER" id="PTHR21143:SF131">
    <property type="entry name" value="GUSTATORY AND ODORANT RECEPTOR 63A-RELATED"/>
    <property type="match status" value="1"/>
</dbReference>
<dbReference type="PANTHER" id="PTHR21143">
    <property type="entry name" value="INVERTEBRATE GUSTATORY RECEPTOR"/>
    <property type="match status" value="1"/>
</dbReference>
<dbReference type="Pfam" id="PF08395">
    <property type="entry name" value="7tm_7"/>
    <property type="match status" value="1"/>
</dbReference>
<accession>P58952</accession>
<protein>
    <recommendedName>
        <fullName>Putative gustatory receptor 22c</fullName>
    </recommendedName>
</protein>
<organism>
    <name type="scientific">Drosophila melanogaster</name>
    <name type="common">Fruit fly</name>
    <dbReference type="NCBI Taxonomy" id="7227"/>
    <lineage>
        <taxon>Eukaryota</taxon>
        <taxon>Metazoa</taxon>
        <taxon>Ecdysozoa</taxon>
        <taxon>Arthropoda</taxon>
        <taxon>Hexapoda</taxon>
        <taxon>Insecta</taxon>
        <taxon>Pterygota</taxon>
        <taxon>Neoptera</taxon>
        <taxon>Endopterygota</taxon>
        <taxon>Diptera</taxon>
        <taxon>Brachycera</taxon>
        <taxon>Muscomorpha</taxon>
        <taxon>Ephydroidea</taxon>
        <taxon>Drosophilidae</taxon>
        <taxon>Drosophila</taxon>
        <taxon>Sophophora</taxon>
    </lineage>
</organism>
<sequence length="383" mass="44407">MFASRSDLQSRLCWIILKATLYSSWFLGVFPYRFDSRNGQLKRSRFLLFYGLILNFFLLLKMVCSGGQKLGIPEAFARNSVLENTHYTTGMLAVFSCVVIHFLNFWGSTRVQDLANELLVLEYQQFASLNETKCPKFNSFVIQKWLSVIGLLLSYLSIAYGLPGNNFSVEMVLINSLVQFSFNCNIMHYYIGVLLIYRYLWLINGQLLEMVTNLKLDCSVDSSRIRKYLSLYRRLLELKGYMVATYEYHMTLVLTTGLASNFLAIYSWIVLDISMNINFIYLLIFPLFLLVNVWNLWLSIAASDLAENAGKSTQTVLKLFADLEVKDIELERSVNEFALLCGHCQFNFHVCGLFTINYKMGFQMIITSFLYLIYMIQFDFMNL</sequence>
<reference key="1">
    <citation type="journal article" date="2000" name="Science">
        <title>The genome sequence of Drosophila melanogaster.</title>
        <authorList>
            <person name="Adams M.D."/>
            <person name="Celniker S.E."/>
            <person name="Holt R.A."/>
            <person name="Evans C.A."/>
            <person name="Gocayne J.D."/>
            <person name="Amanatides P.G."/>
            <person name="Scherer S.E."/>
            <person name="Li P.W."/>
            <person name="Hoskins R.A."/>
            <person name="Galle R.F."/>
            <person name="George R.A."/>
            <person name="Lewis S.E."/>
            <person name="Richards S."/>
            <person name="Ashburner M."/>
            <person name="Henderson S.N."/>
            <person name="Sutton G.G."/>
            <person name="Wortman J.R."/>
            <person name="Yandell M.D."/>
            <person name="Zhang Q."/>
            <person name="Chen L.X."/>
            <person name="Brandon R.C."/>
            <person name="Rogers Y.-H.C."/>
            <person name="Blazej R.G."/>
            <person name="Champe M."/>
            <person name="Pfeiffer B.D."/>
            <person name="Wan K.H."/>
            <person name="Doyle C."/>
            <person name="Baxter E.G."/>
            <person name="Helt G."/>
            <person name="Nelson C.R."/>
            <person name="Miklos G.L.G."/>
            <person name="Abril J.F."/>
            <person name="Agbayani A."/>
            <person name="An H.-J."/>
            <person name="Andrews-Pfannkoch C."/>
            <person name="Baldwin D."/>
            <person name="Ballew R.M."/>
            <person name="Basu A."/>
            <person name="Baxendale J."/>
            <person name="Bayraktaroglu L."/>
            <person name="Beasley E.M."/>
            <person name="Beeson K.Y."/>
            <person name="Benos P.V."/>
            <person name="Berman B.P."/>
            <person name="Bhandari D."/>
            <person name="Bolshakov S."/>
            <person name="Borkova D."/>
            <person name="Botchan M.R."/>
            <person name="Bouck J."/>
            <person name="Brokstein P."/>
            <person name="Brottier P."/>
            <person name="Burtis K.C."/>
            <person name="Busam D.A."/>
            <person name="Butler H."/>
            <person name="Cadieu E."/>
            <person name="Center A."/>
            <person name="Chandra I."/>
            <person name="Cherry J.M."/>
            <person name="Cawley S."/>
            <person name="Dahlke C."/>
            <person name="Davenport L.B."/>
            <person name="Davies P."/>
            <person name="de Pablos B."/>
            <person name="Delcher A."/>
            <person name="Deng Z."/>
            <person name="Mays A.D."/>
            <person name="Dew I."/>
            <person name="Dietz S.M."/>
            <person name="Dodson K."/>
            <person name="Doup L.E."/>
            <person name="Downes M."/>
            <person name="Dugan-Rocha S."/>
            <person name="Dunkov B.C."/>
            <person name="Dunn P."/>
            <person name="Durbin K.J."/>
            <person name="Evangelista C.C."/>
            <person name="Ferraz C."/>
            <person name="Ferriera S."/>
            <person name="Fleischmann W."/>
            <person name="Fosler C."/>
            <person name="Gabrielian A.E."/>
            <person name="Garg N.S."/>
            <person name="Gelbart W.M."/>
            <person name="Glasser K."/>
            <person name="Glodek A."/>
            <person name="Gong F."/>
            <person name="Gorrell J.H."/>
            <person name="Gu Z."/>
            <person name="Guan P."/>
            <person name="Harris M."/>
            <person name="Harris N.L."/>
            <person name="Harvey D.A."/>
            <person name="Heiman T.J."/>
            <person name="Hernandez J.R."/>
            <person name="Houck J."/>
            <person name="Hostin D."/>
            <person name="Houston K.A."/>
            <person name="Howland T.J."/>
            <person name="Wei M.-H."/>
            <person name="Ibegwam C."/>
            <person name="Jalali M."/>
            <person name="Kalush F."/>
            <person name="Karpen G.H."/>
            <person name="Ke Z."/>
            <person name="Kennison J.A."/>
            <person name="Ketchum K.A."/>
            <person name="Kimmel B.E."/>
            <person name="Kodira C.D."/>
            <person name="Kraft C.L."/>
            <person name="Kravitz S."/>
            <person name="Kulp D."/>
            <person name="Lai Z."/>
            <person name="Lasko P."/>
            <person name="Lei Y."/>
            <person name="Levitsky A.A."/>
            <person name="Li J.H."/>
            <person name="Li Z."/>
            <person name="Liang Y."/>
            <person name="Lin X."/>
            <person name="Liu X."/>
            <person name="Mattei B."/>
            <person name="McIntosh T.C."/>
            <person name="McLeod M.P."/>
            <person name="McPherson D."/>
            <person name="Merkulov G."/>
            <person name="Milshina N.V."/>
            <person name="Mobarry C."/>
            <person name="Morris J."/>
            <person name="Moshrefi A."/>
            <person name="Mount S.M."/>
            <person name="Moy M."/>
            <person name="Murphy B."/>
            <person name="Murphy L."/>
            <person name="Muzny D.M."/>
            <person name="Nelson D.L."/>
            <person name="Nelson D.R."/>
            <person name="Nelson K.A."/>
            <person name="Nixon K."/>
            <person name="Nusskern D.R."/>
            <person name="Pacleb J.M."/>
            <person name="Palazzolo M."/>
            <person name="Pittman G.S."/>
            <person name="Pan S."/>
            <person name="Pollard J."/>
            <person name="Puri V."/>
            <person name="Reese M.G."/>
            <person name="Reinert K."/>
            <person name="Remington K."/>
            <person name="Saunders R.D.C."/>
            <person name="Scheeler F."/>
            <person name="Shen H."/>
            <person name="Shue B.C."/>
            <person name="Siden-Kiamos I."/>
            <person name="Simpson M."/>
            <person name="Skupski M.P."/>
            <person name="Smith T.J."/>
            <person name="Spier E."/>
            <person name="Spradling A.C."/>
            <person name="Stapleton M."/>
            <person name="Strong R."/>
            <person name="Sun E."/>
            <person name="Svirskas R."/>
            <person name="Tector C."/>
            <person name="Turner R."/>
            <person name="Venter E."/>
            <person name="Wang A.H."/>
            <person name="Wang X."/>
            <person name="Wang Z.-Y."/>
            <person name="Wassarman D.A."/>
            <person name="Weinstock G.M."/>
            <person name="Weissenbach J."/>
            <person name="Williams S.M."/>
            <person name="Woodage T."/>
            <person name="Worley K.C."/>
            <person name="Wu D."/>
            <person name="Yang S."/>
            <person name="Yao Q.A."/>
            <person name="Ye J."/>
            <person name="Yeh R.-F."/>
            <person name="Zaveri J.S."/>
            <person name="Zhan M."/>
            <person name="Zhang G."/>
            <person name="Zhao Q."/>
            <person name="Zheng L."/>
            <person name="Zheng X.H."/>
            <person name="Zhong F.N."/>
            <person name="Zhong W."/>
            <person name="Zhou X."/>
            <person name="Zhu S.C."/>
            <person name="Zhu X."/>
            <person name="Smith H.O."/>
            <person name="Gibbs R.A."/>
            <person name="Myers E.W."/>
            <person name="Rubin G.M."/>
            <person name="Venter J.C."/>
        </authorList>
    </citation>
    <scope>NUCLEOTIDE SEQUENCE [LARGE SCALE GENOMIC DNA]</scope>
    <source>
        <strain>Berkeley</strain>
    </source>
</reference>
<reference key="2">
    <citation type="journal article" date="2002" name="Genome Biol.">
        <title>Annotation of the Drosophila melanogaster euchromatic genome: a systematic review.</title>
        <authorList>
            <person name="Misra S."/>
            <person name="Crosby M.A."/>
            <person name="Mungall C.J."/>
            <person name="Matthews B.B."/>
            <person name="Campbell K.S."/>
            <person name="Hradecky P."/>
            <person name="Huang Y."/>
            <person name="Kaminker J.S."/>
            <person name="Millburn G.H."/>
            <person name="Prochnik S.E."/>
            <person name="Smith C.D."/>
            <person name="Tupy J.L."/>
            <person name="Whitfield E.J."/>
            <person name="Bayraktaroglu L."/>
            <person name="Berman B.P."/>
            <person name="Bettencourt B.R."/>
            <person name="Celniker S.E."/>
            <person name="de Grey A.D.N.J."/>
            <person name="Drysdale R.A."/>
            <person name="Harris N.L."/>
            <person name="Richter J."/>
            <person name="Russo S."/>
            <person name="Schroeder A.J."/>
            <person name="Shu S.Q."/>
            <person name="Stapleton M."/>
            <person name="Yamada C."/>
            <person name="Ashburner M."/>
            <person name="Gelbart W.M."/>
            <person name="Rubin G.M."/>
            <person name="Lewis S.E."/>
        </authorList>
    </citation>
    <scope>GENOME REANNOTATION</scope>
    <source>
        <strain>Berkeley</strain>
    </source>
</reference>
<reference key="3">
    <citation type="journal article" date="2001" name="Curr. Biol.">
        <title>Spatially restricted expression of candidate taste receptors in the Drosophila gustatory system.</title>
        <authorList>
            <person name="Dunipace L."/>
            <person name="Meister S."/>
            <person name="McNealy C."/>
            <person name="Amrein H."/>
        </authorList>
    </citation>
    <scope>IDENTIFICATION</scope>
    <scope>TISSUE SPECIFICITY</scope>
</reference>
<reference key="4">
    <citation type="journal article" date="2004" name="Cell">
        <title>Taste representations in the Drosophila brain.</title>
        <authorList>
            <person name="Wang Z."/>
            <person name="Singhvi A."/>
            <person name="Kong P."/>
            <person name="Scott K."/>
        </authorList>
    </citation>
    <scope>TISSUE SPECIFICITY</scope>
</reference>
<comment type="function">
    <text evidence="1">Probable gustatory receptor which mediates acceptance or avoidance behavior, depending on its substrates.</text>
</comment>
<comment type="subcellular location">
    <subcellularLocation>
        <location evidence="1">Cell membrane</location>
        <topology evidence="1">Multi-pass membrane protein</topology>
    </subcellularLocation>
</comment>
<comment type="tissue specificity">
    <text evidence="3 4">Taste bristles in the foreleg and labial palps.</text>
</comment>
<comment type="similarity">
    <text evidence="5">Belongs to the insect chemoreceptor superfamily. Gustatory receptor (GR) family. Gr22e subfamily.</text>
</comment>
<evidence type="ECO:0000250" key="1"/>
<evidence type="ECO:0000255" key="2"/>
<evidence type="ECO:0000269" key="3">
    <source>
    </source>
</evidence>
<evidence type="ECO:0000269" key="4">
    <source>
    </source>
</evidence>
<evidence type="ECO:0000305" key="5"/>
<proteinExistence type="evidence at transcript level"/>
<gene>
    <name type="primary">Gr22c</name>
    <name type="ORF">CG31929</name>
</gene>